<dbReference type="EC" id="2.5.1.27"/>
<dbReference type="EMBL" id="X03933">
    <property type="protein sequence ID" value="CAA27572.1"/>
    <property type="molecule type" value="Genomic_DNA"/>
</dbReference>
<dbReference type="EMBL" id="J03320">
    <property type="status" value="NOT_ANNOTATED_CDS"/>
    <property type="molecule type" value="Genomic_DNA"/>
</dbReference>
<dbReference type="EMBL" id="AE007871">
    <property type="protein sequence ID" value="AAK91123.2"/>
    <property type="molecule type" value="Genomic_DNA"/>
</dbReference>
<dbReference type="PIR" id="AB3248">
    <property type="entry name" value="AB3248"/>
</dbReference>
<dbReference type="PIR" id="S03122">
    <property type="entry name" value="S03122"/>
</dbReference>
<dbReference type="RefSeq" id="NP_396682.2">
    <property type="nucleotide sequence ID" value="NC_003065.3"/>
</dbReference>
<dbReference type="RefSeq" id="WP_010974913.1">
    <property type="nucleotide sequence ID" value="NC_003065.3"/>
</dbReference>
<dbReference type="PDB" id="2ZE5">
    <property type="method" value="X-ray"/>
    <property type="resolution" value="2.31 A"/>
    <property type="chains" value="A=1-243"/>
</dbReference>
<dbReference type="PDB" id="2ZE6">
    <property type="method" value="X-ray"/>
    <property type="resolution" value="2.10 A"/>
    <property type="chains" value="A=1-243"/>
</dbReference>
<dbReference type="PDB" id="2ZE7">
    <property type="method" value="X-ray"/>
    <property type="resolution" value="2.10 A"/>
    <property type="chains" value="A=1-243"/>
</dbReference>
<dbReference type="PDB" id="2ZE8">
    <property type="method" value="X-ray"/>
    <property type="resolution" value="2.80 A"/>
    <property type="chains" value="A/B/C/D=1-243"/>
</dbReference>
<dbReference type="PDBsum" id="2ZE5"/>
<dbReference type="PDBsum" id="2ZE6"/>
<dbReference type="PDBsum" id="2ZE7"/>
<dbReference type="PDBsum" id="2ZE8"/>
<dbReference type="SMR" id="P58758"/>
<dbReference type="IntAct" id="P58758">
    <property type="interactions" value="1"/>
</dbReference>
<dbReference type="DrugBank" id="DB02270">
    <property type="generic name" value="Dimethylallyl S-Thiolodiphosphate"/>
</dbReference>
<dbReference type="EnsemblBacteria" id="AAK91123">
    <property type="protein sequence ID" value="AAK91123"/>
    <property type="gene ID" value="Atu6164"/>
</dbReference>
<dbReference type="GeneID" id="1137487"/>
<dbReference type="KEGG" id="atu:Atu6164"/>
<dbReference type="HOGENOM" id="CLU_1115409_0_0_5"/>
<dbReference type="OrthoDB" id="8293568at2"/>
<dbReference type="BioCyc" id="AGRO:ATU6164-MONOMER"/>
<dbReference type="BRENDA" id="2.5.1.27">
    <property type="organism ID" value="200"/>
</dbReference>
<dbReference type="EvolutionaryTrace" id="P58758"/>
<dbReference type="Proteomes" id="UP000000813">
    <property type="component" value="Plasmid Ti"/>
</dbReference>
<dbReference type="GO" id="GO:0009824">
    <property type="term" value="F:AMP dimethylallyltransferase activity"/>
    <property type="evidence" value="ECO:0007669"/>
    <property type="project" value="UniProtKB-EC"/>
</dbReference>
<dbReference type="GO" id="GO:0009691">
    <property type="term" value="P:cytokinin biosynthetic process"/>
    <property type="evidence" value="ECO:0007669"/>
    <property type="project" value="UniProtKB-KW"/>
</dbReference>
<dbReference type="Gene3D" id="1.10.287.890">
    <property type="entry name" value="Crystal structure of tRNA isopentenylpyrophosphate transferase (bh2366) domain"/>
    <property type="match status" value="1"/>
</dbReference>
<dbReference type="Gene3D" id="3.40.50.300">
    <property type="entry name" value="P-loop containing nucleotide triphosphate hydrolases"/>
    <property type="match status" value="1"/>
</dbReference>
<dbReference type="InterPro" id="IPR027417">
    <property type="entry name" value="P-loop_NTPase"/>
</dbReference>
<dbReference type="InterPro" id="IPR002648">
    <property type="entry name" value="Tzs"/>
</dbReference>
<dbReference type="Pfam" id="PF01745">
    <property type="entry name" value="IPT"/>
    <property type="match status" value="1"/>
</dbReference>
<dbReference type="PIRSF" id="PIRSF000507">
    <property type="entry name" value="IPT"/>
    <property type="match status" value="1"/>
</dbReference>
<dbReference type="SUPFAM" id="SSF52540">
    <property type="entry name" value="P-loop containing nucleoside triphosphate hydrolases"/>
    <property type="match status" value="1"/>
</dbReference>
<sequence>MLLHLIYGPTCSGKTDMAIQIAQETGWPVVALDRVQCCPQIATGSGRPLESELQSTRRIYLDSRPLTEGILDAESAHRRLIFEVDWRKSEEGLILEGGSISLLNCMAKSPFWRSGFQWHVKRLRLGDSDAFLTRAKQRVAEMFAIREDRPSLLEELAELWNYPAARPILEDIDGYRCAIRFARKHDLAISQLPNIDAGRHVELIEAIANEYLEHALSQERDFPQWPEDGAGQPVCPVTLTRIR</sequence>
<feature type="chain" id="PRO_0000216441" description="Adenylate dimethylallyltransferase">
    <location>
        <begin position="1"/>
        <end position="243"/>
    </location>
</feature>
<feature type="strand" evidence="3">
    <location>
        <begin position="2"/>
        <end position="7"/>
    </location>
</feature>
<feature type="strand" evidence="2">
    <location>
        <begin position="9"/>
        <end position="13"/>
    </location>
</feature>
<feature type="helix" evidence="3">
    <location>
        <begin position="14"/>
        <end position="25"/>
    </location>
</feature>
<feature type="strand" evidence="3">
    <location>
        <begin position="29"/>
        <end position="31"/>
    </location>
</feature>
<feature type="helix" evidence="3">
    <location>
        <begin position="35"/>
        <end position="37"/>
    </location>
</feature>
<feature type="helix" evidence="3">
    <location>
        <begin position="39"/>
        <end position="41"/>
    </location>
</feature>
<feature type="turn" evidence="3">
    <location>
        <begin position="42"/>
        <end position="46"/>
    </location>
</feature>
<feature type="helix" evidence="3">
    <location>
        <begin position="50"/>
        <end position="53"/>
    </location>
</feature>
<feature type="strand" evidence="4">
    <location>
        <begin position="57"/>
        <end position="59"/>
    </location>
</feature>
<feature type="helix" evidence="3">
    <location>
        <begin position="66"/>
        <end position="68"/>
    </location>
</feature>
<feature type="helix" evidence="3">
    <location>
        <begin position="73"/>
        <end position="85"/>
    </location>
</feature>
<feature type="turn" evidence="3">
    <location>
        <begin position="86"/>
        <end position="89"/>
    </location>
</feature>
<feature type="strand" evidence="3">
    <location>
        <begin position="90"/>
        <end position="97"/>
    </location>
</feature>
<feature type="helix" evidence="3">
    <location>
        <begin position="100"/>
        <end position="108"/>
    </location>
</feature>
<feature type="turn" evidence="3">
    <location>
        <begin position="110"/>
        <end position="113"/>
    </location>
</feature>
<feature type="strand" evidence="3">
    <location>
        <begin position="117"/>
        <end position="122"/>
    </location>
</feature>
<feature type="helix" evidence="3">
    <location>
        <begin position="128"/>
        <end position="143"/>
    </location>
</feature>
<feature type="strand" evidence="3">
    <location>
        <begin position="147"/>
        <end position="149"/>
    </location>
</feature>
<feature type="helix" evidence="3">
    <location>
        <begin position="152"/>
        <end position="160"/>
    </location>
</feature>
<feature type="helix" evidence="3">
    <location>
        <begin position="165"/>
        <end position="169"/>
    </location>
</feature>
<feature type="helix" evidence="3">
    <location>
        <begin position="175"/>
        <end position="184"/>
    </location>
</feature>
<feature type="helix" evidence="3">
    <location>
        <begin position="189"/>
        <end position="194"/>
    </location>
</feature>
<feature type="helix" evidence="3">
    <location>
        <begin position="199"/>
        <end position="221"/>
    </location>
</feature>
<evidence type="ECO:0000269" key="1">
    <source ref="5"/>
</evidence>
<evidence type="ECO:0007829" key="2">
    <source>
        <dbReference type="PDB" id="2ZE5"/>
    </source>
</evidence>
<evidence type="ECO:0007829" key="3">
    <source>
        <dbReference type="PDB" id="2ZE6"/>
    </source>
</evidence>
<evidence type="ECO:0007829" key="4">
    <source>
        <dbReference type="PDB" id="2ZE8"/>
    </source>
</evidence>
<protein>
    <recommendedName>
        <fullName>Adenylate dimethylallyltransferase</fullName>
        <ecNumber>2.5.1.27</ecNumber>
    </recommendedName>
    <alternativeName>
        <fullName>Dimethylallyl transferase</fullName>
    </alternativeName>
    <alternativeName>
        <fullName>Isopentenyl transferase</fullName>
    </alternativeName>
    <alternativeName>
        <fullName>Trans-zeatin producing protein</fullName>
    </alternativeName>
</protein>
<keyword id="KW-0002">3D-structure</keyword>
<keyword id="KW-0192">Crown gall tumor</keyword>
<keyword id="KW-0203">Cytokinin biosynthesis</keyword>
<keyword id="KW-0614">Plasmid</keyword>
<keyword id="KW-1185">Reference proteome</keyword>
<keyword id="KW-0808">Transferase</keyword>
<geneLocation type="plasmid">
    <name>pTiC58</name>
</geneLocation>
<proteinExistence type="evidence at protein level"/>
<gene>
    <name type="primary">tzs</name>
    <name type="ordered locus">Atu6164</name>
    <name type="ORF">AGR_pTi_290</name>
</gene>
<reference key="1">
    <citation type="journal article" date="1986" name="Mol. Gen. Genet.">
        <title>Tzs, a nopaline Ti plasmid gene from Agrobacterium tumefaciens associated with trans-zeatin biosynthesis.</title>
        <authorList>
            <person name="Beaty J.S."/>
            <person name="Powell G.K."/>
            <person name="Lica L."/>
            <person name="Regier D.A."/>
            <person name="McDonald E.M.S."/>
            <person name="Hommes N.G."/>
            <person name="Morris R.O."/>
        </authorList>
    </citation>
    <scope>NUCLEOTIDE SEQUENCE [GENOMIC DNA]</scope>
</reference>
<reference key="2">
    <citation type="journal article" date="1990" name="Plasmid">
        <title>Molecular characterization of the vir regulon of Agrobacterium tumefaciens: complete nucleotide sequence and gene organization of the 28.63-kbp regulon cloned as a single unit.</title>
        <authorList>
            <person name="Rogowsky P.M."/>
            <person name="Powell B.S."/>
            <person name="Shirasu K."/>
            <person name="Lin T.-S."/>
            <person name="Morel P."/>
            <person name="Zyprian E.M."/>
            <person name="Steck T.R."/>
            <person name="Kado C.I."/>
        </authorList>
    </citation>
    <scope>NUCLEOTIDE SEQUENCE [GENOMIC DNA]</scope>
</reference>
<reference key="3">
    <citation type="journal article" date="2001" name="Science">
        <title>The genome of the natural genetic engineer Agrobacterium tumefaciens C58.</title>
        <authorList>
            <person name="Wood D.W."/>
            <person name="Setubal J.C."/>
            <person name="Kaul R."/>
            <person name="Monks D.E."/>
            <person name="Kitajima J.P."/>
            <person name="Okura V.K."/>
            <person name="Zhou Y."/>
            <person name="Chen L."/>
            <person name="Wood G.E."/>
            <person name="Almeida N.F. Jr."/>
            <person name="Woo L."/>
            <person name="Chen Y."/>
            <person name="Paulsen I.T."/>
            <person name="Eisen J.A."/>
            <person name="Karp P.D."/>
            <person name="Bovee D. Sr."/>
            <person name="Chapman P."/>
            <person name="Clendenning J."/>
            <person name="Deatherage G."/>
            <person name="Gillet W."/>
            <person name="Grant C."/>
            <person name="Kutyavin T."/>
            <person name="Levy R."/>
            <person name="Li M.-J."/>
            <person name="McClelland E."/>
            <person name="Palmieri A."/>
            <person name="Raymond C."/>
            <person name="Rouse G."/>
            <person name="Saenphimmachak C."/>
            <person name="Wu Z."/>
            <person name="Romero P."/>
            <person name="Gordon D."/>
            <person name="Zhang S."/>
            <person name="Yoo H."/>
            <person name="Tao Y."/>
            <person name="Biddle P."/>
            <person name="Jung M."/>
            <person name="Krespan W."/>
            <person name="Perry M."/>
            <person name="Gordon-Kamm B."/>
            <person name="Liao L."/>
            <person name="Kim S."/>
            <person name="Hendrick C."/>
            <person name="Zhao Z.-Y."/>
            <person name="Dolan M."/>
            <person name="Chumley F."/>
            <person name="Tingey S.V."/>
            <person name="Tomb J.-F."/>
            <person name="Gordon M.P."/>
            <person name="Olson M.V."/>
            <person name="Nester E.W."/>
        </authorList>
    </citation>
    <scope>NUCLEOTIDE SEQUENCE [LARGE SCALE GENOMIC DNA]</scope>
</reference>
<reference key="4">
    <citation type="journal article" date="2001" name="Science">
        <title>Genome sequence of the plant pathogen and biotechnology agent Agrobacterium tumefaciens C58.</title>
        <authorList>
            <person name="Goodner B."/>
            <person name="Hinkle G."/>
            <person name="Gattung S."/>
            <person name="Miller N."/>
            <person name="Blanchard M."/>
            <person name="Qurollo B."/>
            <person name="Goldman B.S."/>
            <person name="Cao Y."/>
            <person name="Askenazi M."/>
            <person name="Halling C."/>
            <person name="Mullin L."/>
            <person name="Houmiel K."/>
            <person name="Gordon J."/>
            <person name="Vaudin M."/>
            <person name="Iartchouk O."/>
            <person name="Epp A."/>
            <person name="Liu F."/>
            <person name="Wollam C."/>
            <person name="Allinger M."/>
            <person name="Doughty D."/>
            <person name="Scott C."/>
            <person name="Lappas C."/>
            <person name="Markelz B."/>
            <person name="Flanagan C."/>
            <person name="Crowell C."/>
            <person name="Gurson J."/>
            <person name="Lomo C."/>
            <person name="Sear C."/>
            <person name="Strub G."/>
            <person name="Cielo C."/>
            <person name="Slater S."/>
        </authorList>
    </citation>
    <scope>NUCLEOTIDE SEQUENCE [LARGE SCALE GENOMIC DNA]</scope>
    <source>
        <strain>C58 / ATCC 33970</strain>
    </source>
</reference>
<reference key="5">
    <citation type="journal article" date="1993" name="Aust. J. Plant Physiol.">
        <title>Cytokinins in plant pathogenic bacteria and developing cereal grains.</title>
        <authorList>
            <person name="Morris R.O."/>
            <person name="Blevins D.G."/>
            <person name="Dietrich J.T."/>
            <person name="Durley R.C."/>
            <person name="Gelvin S.B."/>
            <person name="Gray J."/>
            <person name="Hommes N.G."/>
            <person name="Kaminek M."/>
            <person name="Mathews L.J."/>
            <person name="Meilan R."/>
        </authorList>
    </citation>
    <scope>FUNCTION</scope>
    <scope>CATALYTIC ACTIVITY</scope>
</reference>
<accession>P58758</accession>
<comment type="function">
    <text evidence="1">Transfers dimethylallyl groups to AMP as part of the biosynthesis of cytokinin phytohormones.</text>
</comment>
<comment type="catalytic activity">
    <reaction evidence="1">
        <text>dimethylallyl diphosphate + AMP = N(6)-(dimethylallyl)adenosine 5'-phosphate + diphosphate</text>
        <dbReference type="Rhea" id="RHEA:15285"/>
        <dbReference type="ChEBI" id="CHEBI:33019"/>
        <dbReference type="ChEBI" id="CHEBI:57526"/>
        <dbReference type="ChEBI" id="CHEBI:57623"/>
        <dbReference type="ChEBI" id="CHEBI:456215"/>
        <dbReference type="EC" id="2.5.1.27"/>
    </reaction>
</comment>
<comment type="interaction">
    <interactant intactId="EBI-6402098">
        <id>P58758</id>
    </interactant>
    <interactant intactId="EBI-6400510">
        <id>P17795</id>
        <label>virB5</label>
    </interactant>
    <organismsDiffer>false</organismsDiffer>
    <experiments>4</experiments>
</comment>
<name>IPTZ_AGRFC</name>
<organism>
    <name type="scientific">Agrobacterium fabrum (strain C58 / ATCC 33970)</name>
    <name type="common">Agrobacterium tumefaciens (strain C58)</name>
    <dbReference type="NCBI Taxonomy" id="176299"/>
    <lineage>
        <taxon>Bacteria</taxon>
        <taxon>Pseudomonadati</taxon>
        <taxon>Pseudomonadota</taxon>
        <taxon>Alphaproteobacteria</taxon>
        <taxon>Hyphomicrobiales</taxon>
        <taxon>Rhizobiaceae</taxon>
        <taxon>Rhizobium/Agrobacterium group</taxon>
        <taxon>Agrobacterium</taxon>
        <taxon>Agrobacterium tumefaciens complex</taxon>
    </lineage>
</organism>